<reference key="1">
    <citation type="journal article" date="2004" name="Genome Res.">
        <title>The status, quality, and expansion of the NIH full-length cDNA project: the Mammalian Gene Collection (MGC).</title>
        <authorList>
            <consortium name="The MGC Project Team"/>
        </authorList>
    </citation>
    <scope>NUCLEOTIDE SEQUENCE [LARGE SCALE MRNA]</scope>
    <source>
        <tissue>Testis</tissue>
    </source>
</reference>
<dbReference type="EMBL" id="BC079318">
    <property type="protein sequence ID" value="AAH79318.1"/>
    <property type="molecule type" value="mRNA"/>
</dbReference>
<dbReference type="RefSeq" id="NP_001004079.1">
    <property type="nucleotide sequence ID" value="NM_001004079.2"/>
</dbReference>
<dbReference type="SMR" id="Q6AXU0"/>
<dbReference type="FunCoup" id="Q6AXU0">
    <property type="interactions" value="57"/>
</dbReference>
<dbReference type="STRING" id="10116.ENSRNOP00000049523"/>
<dbReference type="GlyCosmos" id="Q6AXU0">
    <property type="glycosylation" value="2 sites, No reported glycans"/>
</dbReference>
<dbReference type="GlyGen" id="Q6AXU0">
    <property type="glycosylation" value="2 sites"/>
</dbReference>
<dbReference type="PhosphoSitePlus" id="Q6AXU0"/>
<dbReference type="PaxDb" id="10116-ENSRNOP00000049523"/>
<dbReference type="GeneID" id="296321"/>
<dbReference type="KEGG" id="rno:296321"/>
<dbReference type="AGR" id="RGD:1303179"/>
<dbReference type="CTD" id="671"/>
<dbReference type="RGD" id="1303179">
    <property type="gene designation" value="Bpi"/>
</dbReference>
<dbReference type="VEuPathDB" id="HostDB:ENSRNOG00000034195"/>
<dbReference type="eggNOG" id="KOG4160">
    <property type="taxonomic scope" value="Eukaryota"/>
</dbReference>
<dbReference type="HOGENOM" id="CLU_028970_3_2_1"/>
<dbReference type="InParanoid" id="Q6AXU0"/>
<dbReference type="PhylomeDB" id="Q6AXU0"/>
<dbReference type="TreeFam" id="TF315617"/>
<dbReference type="Reactome" id="R-RNO-166016">
    <property type="pathway name" value="Toll Like Receptor 4 (TLR4) Cascade"/>
</dbReference>
<dbReference type="Reactome" id="R-RNO-6798695">
    <property type="pathway name" value="Neutrophil degranulation"/>
</dbReference>
<dbReference type="Reactome" id="R-RNO-6803157">
    <property type="pathway name" value="Antimicrobial peptides"/>
</dbReference>
<dbReference type="PRO" id="PR:Q6AXU0"/>
<dbReference type="Proteomes" id="UP000002494">
    <property type="component" value="Chromosome 3"/>
</dbReference>
<dbReference type="Bgee" id="ENSRNOG00000034195">
    <property type="expression patterns" value="Expressed in testis and 5 other cell types or tissues"/>
</dbReference>
<dbReference type="GO" id="GO:0005737">
    <property type="term" value="C:cytoplasm"/>
    <property type="evidence" value="ECO:0000266"/>
    <property type="project" value="RGD"/>
</dbReference>
<dbReference type="GO" id="GO:0005615">
    <property type="term" value="C:extracellular space"/>
    <property type="evidence" value="ECO:0000318"/>
    <property type="project" value="GO_Central"/>
</dbReference>
<dbReference type="GO" id="GO:0016020">
    <property type="term" value="C:membrane"/>
    <property type="evidence" value="ECO:0007669"/>
    <property type="project" value="UniProtKB-KW"/>
</dbReference>
<dbReference type="GO" id="GO:0008289">
    <property type="term" value="F:lipid binding"/>
    <property type="evidence" value="ECO:0000304"/>
    <property type="project" value="RGD"/>
</dbReference>
<dbReference type="GO" id="GO:0001530">
    <property type="term" value="F:lipopolysaccharide binding"/>
    <property type="evidence" value="ECO:0000314"/>
    <property type="project" value="RGD"/>
</dbReference>
<dbReference type="GO" id="GO:0042742">
    <property type="term" value="P:defense response to bacterium"/>
    <property type="evidence" value="ECO:0000314"/>
    <property type="project" value="RGD"/>
</dbReference>
<dbReference type="GO" id="GO:0050829">
    <property type="term" value="P:defense response to Gram-negative bacterium"/>
    <property type="evidence" value="ECO:0000318"/>
    <property type="project" value="GO_Central"/>
</dbReference>
<dbReference type="GO" id="GO:0006955">
    <property type="term" value="P:immune response"/>
    <property type="evidence" value="ECO:0000314"/>
    <property type="project" value="RGD"/>
</dbReference>
<dbReference type="GO" id="GO:0045087">
    <property type="term" value="P:innate immune response"/>
    <property type="evidence" value="ECO:0000318"/>
    <property type="project" value="GO_Central"/>
</dbReference>
<dbReference type="GO" id="GO:0031663">
    <property type="term" value="P:lipopolysaccharide-mediated signaling pathway"/>
    <property type="evidence" value="ECO:0000318"/>
    <property type="project" value="GO_Central"/>
</dbReference>
<dbReference type="GO" id="GO:0032715">
    <property type="term" value="P:negative regulation of interleukin-6 production"/>
    <property type="evidence" value="ECO:0000266"/>
    <property type="project" value="RGD"/>
</dbReference>
<dbReference type="GO" id="GO:0032717">
    <property type="term" value="P:negative regulation of interleukin-8 production"/>
    <property type="evidence" value="ECO:0000266"/>
    <property type="project" value="RGD"/>
</dbReference>
<dbReference type="GO" id="GO:0043031">
    <property type="term" value="P:negative regulation of macrophage activation"/>
    <property type="evidence" value="ECO:0000266"/>
    <property type="project" value="RGD"/>
</dbReference>
<dbReference type="GO" id="GO:0032720">
    <property type="term" value="P:negative regulation of tumor necrosis factor production"/>
    <property type="evidence" value="ECO:0000266"/>
    <property type="project" value="RGD"/>
</dbReference>
<dbReference type="CDD" id="cd00025">
    <property type="entry name" value="BPI1"/>
    <property type="match status" value="1"/>
</dbReference>
<dbReference type="CDD" id="cd00026">
    <property type="entry name" value="BPI2"/>
    <property type="match status" value="1"/>
</dbReference>
<dbReference type="FunFam" id="3.15.20.10:FF:000001">
    <property type="entry name" value="Phospholipid transfer protein"/>
    <property type="match status" value="1"/>
</dbReference>
<dbReference type="FunFam" id="3.15.10.10:FF:000001">
    <property type="entry name" value="phospholipid transfer protein-like"/>
    <property type="match status" value="1"/>
</dbReference>
<dbReference type="Gene3D" id="3.15.10.10">
    <property type="entry name" value="Bactericidal permeability-increasing protein, domain 1"/>
    <property type="match status" value="1"/>
</dbReference>
<dbReference type="Gene3D" id="3.15.20.10">
    <property type="entry name" value="Bactericidal permeability-increasing protein, domain 2"/>
    <property type="match status" value="1"/>
</dbReference>
<dbReference type="InterPro" id="IPR017943">
    <property type="entry name" value="Bactericidal_perm-incr_a/b_dom"/>
</dbReference>
<dbReference type="InterPro" id="IPR030675">
    <property type="entry name" value="BPI/LBP"/>
</dbReference>
<dbReference type="InterPro" id="IPR032942">
    <property type="entry name" value="BPI/LBP/Plunc"/>
</dbReference>
<dbReference type="InterPro" id="IPR001124">
    <property type="entry name" value="Lipid-bd_serum_glycop_C"/>
</dbReference>
<dbReference type="InterPro" id="IPR017942">
    <property type="entry name" value="Lipid-bd_serum_glycop_N"/>
</dbReference>
<dbReference type="PANTHER" id="PTHR10504">
    <property type="entry name" value="BACTERICIDAL PERMEABILITY-INCREASING BPI PROTEIN-RELATED"/>
    <property type="match status" value="1"/>
</dbReference>
<dbReference type="PANTHER" id="PTHR10504:SF84">
    <property type="entry name" value="BACTERICIDAL PERMEABILITY-INCREASING PROTEIN"/>
    <property type="match status" value="1"/>
</dbReference>
<dbReference type="Pfam" id="PF01273">
    <property type="entry name" value="LBP_BPI_CETP"/>
    <property type="match status" value="1"/>
</dbReference>
<dbReference type="Pfam" id="PF02886">
    <property type="entry name" value="LBP_BPI_CETP_C"/>
    <property type="match status" value="1"/>
</dbReference>
<dbReference type="PIRSF" id="PIRSF002417">
    <property type="entry name" value="Lipid_binding_protein"/>
    <property type="match status" value="1"/>
</dbReference>
<dbReference type="SMART" id="SM00328">
    <property type="entry name" value="BPI1"/>
    <property type="match status" value="1"/>
</dbReference>
<dbReference type="SMART" id="SM00329">
    <property type="entry name" value="BPI2"/>
    <property type="match status" value="1"/>
</dbReference>
<dbReference type="SUPFAM" id="SSF55394">
    <property type="entry name" value="Bactericidal permeability-increasing protein, BPI"/>
    <property type="match status" value="2"/>
</dbReference>
<comment type="function">
    <text evidence="3">The cytotoxic action of BPI is limited to many species of Gram-negative bacteria; this specificity may be explained by a strong affinity of the very basic N-terminal half for the negatively charged lipopolysaccharides that are unique to the Gram-negative bacterial outer envelope.</text>
</comment>
<comment type="subunit">
    <text evidence="2">Monomer. Homodimer; disulfide-linked.</text>
</comment>
<comment type="subcellular location">
    <subcellularLocation>
        <location evidence="2">Secreted</location>
    </subcellularLocation>
    <subcellularLocation>
        <location evidence="2">Cytoplasmic granule membrane</location>
    </subcellularLocation>
    <text evidence="2">Membrane-associated in polymorphonuclear Leukocytes (PMN) granules.</text>
</comment>
<comment type="domain">
    <text evidence="2">The N-terminal region may be exposed to the interior of the granule, whereas the C-terminal portion may be embedded in the membrane. During phagocytosis and degranulation, proteases may be released and activated and cleave BPI at the junction of the N- and C-terminal portions of the molecule, providing controlled release of the N-terminal antibacterial fragment when bacteria are ingested.</text>
</comment>
<comment type="domain">
    <text evidence="2">The N- and C-terminal barrels adopt an identical fold despite having only 13% of conserved residues.</text>
</comment>
<comment type="similarity">
    <text evidence="5">Belongs to the BPI/LBP/Plunc superfamily. BPI/LBP family.</text>
</comment>
<evidence type="ECO:0000250" key="1"/>
<evidence type="ECO:0000250" key="2">
    <source>
        <dbReference type="UniProtKB" id="P17213"/>
    </source>
</evidence>
<evidence type="ECO:0000250" key="3">
    <source>
        <dbReference type="UniProtKB" id="Q67E05"/>
    </source>
</evidence>
<evidence type="ECO:0000255" key="4"/>
<evidence type="ECO:0000305" key="5"/>
<proteinExistence type="evidence at transcript level"/>
<gene>
    <name type="primary">Bpi</name>
</gene>
<sequence>MAWGPDNVRKWSSLALLAIVGTALTAATDPGFVARISQKGLDFVCQESMVELQKELLAISIPDFSGDFKIKHLGKGTYEFYSMAVEGFHIPDPQIKLLPSDGLQLSITSASIKISGRWKYRKNILKASGNFQLSIQGVSIIADLILGNDPSGRITITCSTCDSHINSVRIKVSGSMLGWLIQLFHRKIETSLKKTIYKKICKIVRNSVSAKLQPYVKTLPVVAKVDDITSIDYSLLAPPMTTDKFLEGQLRGEFFWRGHHGPFPAVPPVMNILPNNNYMVCMGISDYFFNTAEFAYQESETLKITLRDQLLAKDARYHLNTDFLKTFLPEVAKKFPSMGLQLLISAPLFAHLNIQPSGLSLSPNLETRAFVVLPNSSLIPLFLLGMKTNASLEVNAMKNRLIGEMKLGRLLLELKQSNFGSFKVELLEDVINYLMSTMVLPKINEKLRRGFPLPLPAGIQLINSILYSSQNFLLLEADLHRT</sequence>
<keyword id="KW-0044">Antibiotic</keyword>
<keyword id="KW-0929">Antimicrobial</keyword>
<keyword id="KW-1015">Disulfide bond</keyword>
<keyword id="KW-0325">Glycoprotein</keyword>
<keyword id="KW-0391">Immunity</keyword>
<keyword id="KW-0399">Innate immunity</keyword>
<keyword id="KW-0472">Membrane</keyword>
<keyword id="KW-1185">Reference proteome</keyword>
<keyword id="KW-0964">Secreted</keyword>
<keyword id="KW-0732">Signal</keyword>
<protein>
    <recommendedName>
        <fullName>Bactericidal permeability-increasing protein</fullName>
        <shortName>BPI</shortName>
    </recommendedName>
</protein>
<feature type="signal peptide" evidence="4">
    <location>
        <begin position="1"/>
        <end position="27"/>
    </location>
</feature>
<feature type="chain" id="PRO_0000358333" description="Bactericidal permeability-increasing protein">
    <location>
        <begin position="28"/>
        <end position="482"/>
    </location>
</feature>
<feature type="region of interest" description="Central sheet, part 1" evidence="2">
    <location>
        <begin position="28"/>
        <end position="38"/>
    </location>
</feature>
<feature type="region of interest" description="N-terminal barrel" evidence="2">
    <location>
        <begin position="37"/>
        <end position="219"/>
    </location>
</feature>
<feature type="region of interest" description="Central sheet, part 2" evidence="2">
    <location>
        <begin position="221"/>
        <end position="285"/>
    </location>
</feature>
<feature type="region of interest" description="Cleavage sites for elastase" evidence="1">
    <location>
        <begin position="235"/>
        <end position="240"/>
    </location>
</feature>
<feature type="region of interest" description="C-terminal barrel" evidence="2">
    <location>
        <begin position="286"/>
        <end position="456"/>
    </location>
</feature>
<feature type="region of interest" description="Central sheet, part 3" evidence="2">
    <location>
        <begin position="463"/>
        <end position="482"/>
    </location>
</feature>
<feature type="glycosylation site" description="N-linked (GlcNAc...) asparagine" evidence="4">
    <location>
        <position position="375"/>
    </location>
</feature>
<feature type="glycosylation site" description="N-linked (GlcNAc...) asparagine" evidence="4">
    <location>
        <position position="389"/>
    </location>
</feature>
<feature type="disulfide bond" evidence="2">
    <location>
        <begin position="161"/>
        <end position="201"/>
    </location>
</feature>
<organism>
    <name type="scientific">Rattus norvegicus</name>
    <name type="common">Rat</name>
    <dbReference type="NCBI Taxonomy" id="10116"/>
    <lineage>
        <taxon>Eukaryota</taxon>
        <taxon>Metazoa</taxon>
        <taxon>Chordata</taxon>
        <taxon>Craniata</taxon>
        <taxon>Vertebrata</taxon>
        <taxon>Euteleostomi</taxon>
        <taxon>Mammalia</taxon>
        <taxon>Eutheria</taxon>
        <taxon>Euarchontoglires</taxon>
        <taxon>Glires</taxon>
        <taxon>Rodentia</taxon>
        <taxon>Myomorpha</taxon>
        <taxon>Muroidea</taxon>
        <taxon>Muridae</taxon>
        <taxon>Murinae</taxon>
        <taxon>Rattus</taxon>
    </lineage>
</organism>
<accession>Q6AXU0</accession>
<name>BPI_RAT</name>